<gene>
    <name type="ordered locus">ESA_02916</name>
</gene>
<comment type="similarity">
    <text evidence="1">Belongs to the UPF0178 family.</text>
</comment>
<protein>
    <recommendedName>
        <fullName evidence="1">UPF0178 protein ESA_02916</fullName>
    </recommendedName>
</protein>
<accession>A7MLV7</accession>
<name>Y2916_CROS8</name>
<sequence length="151" mass="16684">MPVWVDADACPKVIKEVLFRAAERTETPVILVANQPLRVPPSKFIRARQVPAGFDVADNEIVRCCEPGDLVVTADIPLAAEVIAKGAVALNPRGERYSEATIRERLTMRDFMDTLRASGIQTGGPDALSQRDRQQFAAELDKWLSGRKRQA</sequence>
<evidence type="ECO:0000255" key="1">
    <source>
        <dbReference type="HAMAP-Rule" id="MF_00489"/>
    </source>
</evidence>
<reference key="1">
    <citation type="journal article" date="2010" name="PLoS ONE">
        <title>Genome sequence of Cronobacter sakazakii BAA-894 and comparative genomic hybridization analysis with other Cronobacter species.</title>
        <authorList>
            <person name="Kucerova E."/>
            <person name="Clifton S.W."/>
            <person name="Xia X.Q."/>
            <person name="Long F."/>
            <person name="Porwollik S."/>
            <person name="Fulton L."/>
            <person name="Fronick C."/>
            <person name="Minx P."/>
            <person name="Kyung K."/>
            <person name="Warren W."/>
            <person name="Fulton R."/>
            <person name="Feng D."/>
            <person name="Wollam A."/>
            <person name="Shah N."/>
            <person name="Bhonagiri V."/>
            <person name="Nash W.E."/>
            <person name="Hallsworth-Pepin K."/>
            <person name="Wilson R.K."/>
            <person name="McClelland M."/>
            <person name="Forsythe S.J."/>
        </authorList>
    </citation>
    <scope>NUCLEOTIDE SEQUENCE [LARGE SCALE GENOMIC DNA]</scope>
    <source>
        <strain>ATCC BAA-894</strain>
    </source>
</reference>
<feature type="chain" id="PRO_1000014421" description="UPF0178 protein ESA_02916">
    <location>
        <begin position="1"/>
        <end position="151"/>
    </location>
</feature>
<keyword id="KW-1185">Reference proteome</keyword>
<proteinExistence type="inferred from homology"/>
<dbReference type="EMBL" id="CP000783">
    <property type="protein sequence ID" value="ABU78145.1"/>
    <property type="molecule type" value="Genomic_DNA"/>
</dbReference>
<dbReference type="RefSeq" id="WP_012125517.1">
    <property type="nucleotide sequence ID" value="NC_009778.1"/>
</dbReference>
<dbReference type="KEGG" id="esa:ESA_02916"/>
<dbReference type="PATRIC" id="fig|290339.8.peg.2607"/>
<dbReference type="HOGENOM" id="CLU_106619_2_1_6"/>
<dbReference type="Proteomes" id="UP000000260">
    <property type="component" value="Chromosome"/>
</dbReference>
<dbReference type="CDD" id="cd18720">
    <property type="entry name" value="PIN_YqxD-like"/>
    <property type="match status" value="1"/>
</dbReference>
<dbReference type="HAMAP" id="MF_00489">
    <property type="entry name" value="UPF0178"/>
    <property type="match status" value="1"/>
</dbReference>
<dbReference type="InterPro" id="IPR003791">
    <property type="entry name" value="UPF0178"/>
</dbReference>
<dbReference type="NCBIfam" id="NF001095">
    <property type="entry name" value="PRK00124.1"/>
    <property type="match status" value="1"/>
</dbReference>
<dbReference type="PANTHER" id="PTHR35146">
    <property type="entry name" value="UPF0178 PROTEIN YAII"/>
    <property type="match status" value="1"/>
</dbReference>
<dbReference type="PANTHER" id="PTHR35146:SF1">
    <property type="entry name" value="UPF0178 PROTEIN YAII"/>
    <property type="match status" value="1"/>
</dbReference>
<dbReference type="Pfam" id="PF02639">
    <property type="entry name" value="DUF188"/>
    <property type="match status" value="1"/>
</dbReference>
<organism>
    <name type="scientific">Cronobacter sakazakii (strain ATCC BAA-894)</name>
    <name type="common">Enterobacter sakazakii</name>
    <dbReference type="NCBI Taxonomy" id="290339"/>
    <lineage>
        <taxon>Bacteria</taxon>
        <taxon>Pseudomonadati</taxon>
        <taxon>Pseudomonadota</taxon>
        <taxon>Gammaproteobacteria</taxon>
        <taxon>Enterobacterales</taxon>
        <taxon>Enterobacteriaceae</taxon>
        <taxon>Cronobacter</taxon>
    </lineage>
</organism>